<comment type="function">
    <text evidence="1">Core subunit of the mitochondrial membrane respiratory chain NADH dehydrogenase (Complex I) which catalyzes electron transfer from NADH through the respiratory chain, using ubiquinone as an electron acceptor. Part of the enzyme membrane arm which is embedded in the lipid bilayer and involved in proton translocation.</text>
</comment>
<comment type="catalytic activity">
    <reaction evidence="1">
        <text>a ubiquinone + NADH + 5 H(+)(in) = a ubiquinol + NAD(+) + 4 H(+)(out)</text>
        <dbReference type="Rhea" id="RHEA:29091"/>
        <dbReference type="Rhea" id="RHEA-COMP:9565"/>
        <dbReference type="Rhea" id="RHEA-COMP:9566"/>
        <dbReference type="ChEBI" id="CHEBI:15378"/>
        <dbReference type="ChEBI" id="CHEBI:16389"/>
        <dbReference type="ChEBI" id="CHEBI:17976"/>
        <dbReference type="ChEBI" id="CHEBI:57540"/>
        <dbReference type="ChEBI" id="CHEBI:57945"/>
        <dbReference type="EC" id="7.1.1.2"/>
    </reaction>
    <physiologicalReaction direction="left-to-right" evidence="1">
        <dbReference type="Rhea" id="RHEA:29092"/>
    </physiologicalReaction>
</comment>
<comment type="subunit">
    <text evidence="2">Core subunit of respiratory chain NADH dehydrogenase (Complex I) which is composed of 45 different subunits.</text>
</comment>
<comment type="subcellular location">
    <subcellularLocation>
        <location evidence="2">Mitochondrion inner membrane</location>
        <topology evidence="3">Multi-pass membrane protein</topology>
    </subcellularLocation>
</comment>
<comment type="similarity">
    <text evidence="4">Belongs to the complex I subunit 4L family.</text>
</comment>
<organism>
    <name type="scientific">Phocoena phocoena</name>
    <name type="common">Harbor porpoise</name>
    <dbReference type="NCBI Taxonomy" id="9742"/>
    <lineage>
        <taxon>Eukaryota</taxon>
        <taxon>Metazoa</taxon>
        <taxon>Chordata</taxon>
        <taxon>Craniata</taxon>
        <taxon>Vertebrata</taxon>
        <taxon>Euteleostomi</taxon>
        <taxon>Mammalia</taxon>
        <taxon>Eutheria</taxon>
        <taxon>Laurasiatheria</taxon>
        <taxon>Artiodactyla</taxon>
        <taxon>Whippomorpha</taxon>
        <taxon>Cetacea</taxon>
        <taxon>Odontoceti</taxon>
        <taxon>Phocoenidae</taxon>
        <taxon>Phocoena</taxon>
    </lineage>
</organism>
<accession>Q70RM6</accession>
<reference key="1">
    <citation type="journal article" date="2004" name="Gene">
        <title>Mitogenomic analyses provide new insights into cetacean origin and evolution.</title>
        <authorList>
            <person name="Arnason U."/>
            <person name="Gullberg A."/>
            <person name="Janke A."/>
        </authorList>
    </citation>
    <scope>NUCLEOTIDE SEQUENCE [GENOMIC DNA]</scope>
</reference>
<evidence type="ECO:0000250" key="1">
    <source>
        <dbReference type="UniProtKB" id="P03901"/>
    </source>
</evidence>
<evidence type="ECO:0000250" key="2">
    <source>
        <dbReference type="UniProtKB" id="P03902"/>
    </source>
</evidence>
<evidence type="ECO:0000255" key="3"/>
<evidence type="ECO:0000305" key="4"/>
<feature type="chain" id="PRO_0000275097" description="NADH-ubiquinone oxidoreductase chain 4L">
    <location>
        <begin position="1"/>
        <end position="98"/>
    </location>
</feature>
<feature type="transmembrane region" description="Helical" evidence="3">
    <location>
        <begin position="1"/>
        <end position="21"/>
    </location>
</feature>
<feature type="transmembrane region" description="Helical" evidence="3">
    <location>
        <begin position="29"/>
        <end position="49"/>
    </location>
</feature>
<feature type="transmembrane region" description="Helical" evidence="3">
    <location>
        <begin position="61"/>
        <end position="81"/>
    </location>
</feature>
<name>NU4LM_PHOPH</name>
<geneLocation type="mitochondrion"/>
<sequence length="98" mass="10780">MSLIHINILMAFTMSLVGLLMYRSHLMSALLCLEGMVLSLFILMTLTILNSHFTLANMVPIILLVFAACEAAIGLALLVMVSNTYGTDYVQNLNLLQC</sequence>
<proteinExistence type="inferred from homology"/>
<keyword id="KW-0249">Electron transport</keyword>
<keyword id="KW-0472">Membrane</keyword>
<keyword id="KW-0496">Mitochondrion</keyword>
<keyword id="KW-0999">Mitochondrion inner membrane</keyword>
<keyword id="KW-0520">NAD</keyword>
<keyword id="KW-0679">Respiratory chain</keyword>
<keyword id="KW-1278">Translocase</keyword>
<keyword id="KW-0812">Transmembrane</keyword>
<keyword id="KW-1133">Transmembrane helix</keyword>
<keyword id="KW-0813">Transport</keyword>
<keyword id="KW-0830">Ubiquinone</keyword>
<dbReference type="EC" id="7.1.1.2"/>
<dbReference type="EMBL" id="AJ554063">
    <property type="protein sequence ID" value="CAD88048.1"/>
    <property type="molecule type" value="Genomic_DNA"/>
</dbReference>
<dbReference type="RefSeq" id="NP_944771.1">
    <property type="nucleotide sequence ID" value="NC_005280.1"/>
</dbReference>
<dbReference type="SMR" id="Q70RM6"/>
<dbReference type="GeneID" id="2658426"/>
<dbReference type="CTD" id="4539"/>
<dbReference type="GO" id="GO:0005743">
    <property type="term" value="C:mitochondrial inner membrane"/>
    <property type="evidence" value="ECO:0000250"/>
    <property type="project" value="UniProtKB"/>
</dbReference>
<dbReference type="GO" id="GO:0045271">
    <property type="term" value="C:respiratory chain complex I"/>
    <property type="evidence" value="ECO:0000250"/>
    <property type="project" value="UniProtKB"/>
</dbReference>
<dbReference type="GO" id="GO:0008137">
    <property type="term" value="F:NADH dehydrogenase (ubiquinone) activity"/>
    <property type="evidence" value="ECO:0000250"/>
    <property type="project" value="UniProtKB"/>
</dbReference>
<dbReference type="GO" id="GO:0042773">
    <property type="term" value="P:ATP synthesis coupled electron transport"/>
    <property type="evidence" value="ECO:0007669"/>
    <property type="project" value="InterPro"/>
</dbReference>
<dbReference type="FunFam" id="1.10.287.3510:FF:000002">
    <property type="entry name" value="NADH-ubiquinone oxidoreductase chain 4L"/>
    <property type="match status" value="1"/>
</dbReference>
<dbReference type="Gene3D" id="1.10.287.3510">
    <property type="match status" value="1"/>
</dbReference>
<dbReference type="InterPro" id="IPR001133">
    <property type="entry name" value="NADH_UbQ_OxRdtase_chain4L/K"/>
</dbReference>
<dbReference type="InterPro" id="IPR039428">
    <property type="entry name" value="NUOK/Mnh_C1-like"/>
</dbReference>
<dbReference type="PANTHER" id="PTHR11434:SF0">
    <property type="entry name" value="NADH-UBIQUINONE OXIDOREDUCTASE CHAIN 4L"/>
    <property type="match status" value="1"/>
</dbReference>
<dbReference type="PANTHER" id="PTHR11434">
    <property type="entry name" value="NADH-UBIQUINONE OXIDOREDUCTASE SUBUNIT ND4L"/>
    <property type="match status" value="1"/>
</dbReference>
<dbReference type="Pfam" id="PF00420">
    <property type="entry name" value="Oxidored_q2"/>
    <property type="match status" value="1"/>
</dbReference>
<gene>
    <name type="primary">MT-ND4L</name>
    <name type="synonym">MTND4L</name>
    <name type="synonym">NADH4L</name>
    <name type="synonym">ND4L</name>
</gene>
<protein>
    <recommendedName>
        <fullName>NADH-ubiquinone oxidoreductase chain 4L</fullName>
        <ecNumber>7.1.1.2</ecNumber>
    </recommendedName>
    <alternativeName>
        <fullName>NADH dehydrogenase subunit 4L</fullName>
    </alternativeName>
</protein>